<evidence type="ECO:0000250" key="1">
    <source>
        <dbReference type="UniProtKB" id="Q9M0V0"/>
    </source>
</evidence>
<evidence type="ECO:0000255" key="2"/>
<evidence type="ECO:0000255" key="3">
    <source>
        <dbReference type="PROSITE-ProRule" id="PRU00465"/>
    </source>
</evidence>
<evidence type="ECO:0000303" key="4">
    <source>
    </source>
</evidence>
<evidence type="ECO:0000303" key="5">
    <source>
    </source>
</evidence>
<evidence type="ECO:0000305" key="6"/>
<evidence type="ECO:0000312" key="7">
    <source>
        <dbReference type="Araport" id="AT4G21090"/>
    </source>
</evidence>
<evidence type="ECO:0000312" key="8">
    <source>
        <dbReference type="EMBL" id="BAB86773.1"/>
    </source>
</evidence>
<evidence type="ECO:0000312" key="9">
    <source>
        <dbReference type="EMBL" id="CAA17528.1"/>
    </source>
</evidence>
<protein>
    <recommendedName>
        <fullName evidence="4">Adrenodoxin-like protein 2, mitochondrial</fullName>
    </recommendedName>
    <alternativeName>
        <fullName evidence="5">Mitochondrial ferredoxin 2</fullName>
        <shortName evidence="5">AtMFDX2</shortName>
    </alternativeName>
</protein>
<organism evidence="8">
    <name type="scientific">Arabidopsis thaliana</name>
    <name type="common">Mouse-ear cress</name>
    <dbReference type="NCBI Taxonomy" id="3702"/>
    <lineage>
        <taxon>Eukaryota</taxon>
        <taxon>Viridiplantae</taxon>
        <taxon>Streptophyta</taxon>
        <taxon>Embryophyta</taxon>
        <taxon>Tracheophyta</taxon>
        <taxon>Spermatophyta</taxon>
        <taxon>Magnoliopsida</taxon>
        <taxon>eudicotyledons</taxon>
        <taxon>Gunneridae</taxon>
        <taxon>Pentapetalae</taxon>
        <taxon>rosids</taxon>
        <taxon>malvids</taxon>
        <taxon>Brassicales</taxon>
        <taxon>Brassicaceae</taxon>
        <taxon>Camelineae</taxon>
        <taxon>Arabidopsis</taxon>
    </lineage>
</organism>
<accession>Q8S904</accession>
<accession>O49551</accession>
<keyword id="KW-0001">2Fe-2S</keyword>
<keyword id="KW-0249">Electron transport</keyword>
<keyword id="KW-0408">Iron</keyword>
<keyword id="KW-0411">Iron-sulfur</keyword>
<keyword id="KW-0479">Metal-binding</keyword>
<keyword id="KW-0496">Mitochondrion</keyword>
<keyword id="KW-1185">Reference proteome</keyword>
<keyword id="KW-0809">Transit peptide</keyword>
<keyword id="KW-0813">Transport</keyword>
<sequence length="197" mass="22121">MVFHRLSRLGSRIVKELPRERHLSMCGKRILQRSYGQYLQSSPMLQRQTRSFKEALFSNNHKFCTSFSTTSEKGGEKTEKINVTFVDKDGEEIHIKVPVGMNILEAAHENDIELEGACEGSLACSTCHVIVMDTKYYNKLEEPTDEENDMLDLAFGLTATSRLGCQVIAKPELDGVRLAIPSATRNFAVDGFVPKPH</sequence>
<comment type="function">
    <text evidence="1">Associates with the adrenodoxin reductase MFDR to form an efficient low potential electron transfer chain that is able to reduce cytochrome C.</text>
</comment>
<comment type="cofactor">
    <cofactor evidence="6">
        <name>[2Fe-2S] cluster</name>
        <dbReference type="ChEBI" id="CHEBI:190135"/>
    </cofactor>
    <text evidence="6">Binds 1 [2Fe-2S] cluster.</text>
</comment>
<comment type="subcellular location">
    <subcellularLocation>
        <location evidence="1">Mitochondrion</location>
    </subcellularLocation>
</comment>
<comment type="similarity">
    <text evidence="6">Belongs to the adrenodoxin/putidaredoxin family.</text>
</comment>
<comment type="sequence caution">
    <conflict type="erroneous gene model prediction">
        <sequence resource="EMBL-CDS" id="CAA17528"/>
    </conflict>
</comment>
<comment type="sequence caution">
    <conflict type="erroneous gene model prediction">
        <sequence resource="EMBL-CDS" id="CAB79109"/>
    </conflict>
</comment>
<gene>
    <name evidence="5" type="primary">MFDX2</name>
    <name evidence="4" type="synonym">ADX2</name>
    <name evidence="7" type="ordered locus">At4g21090</name>
    <name evidence="9" type="ORF">F7J7.30</name>
</gene>
<proteinExistence type="evidence at transcript level"/>
<feature type="transit peptide" description="Mitochondrion" evidence="2">
    <location>
        <begin position="1"/>
        <end position="74"/>
    </location>
</feature>
<feature type="chain" id="PRO_0000430543" description="Adrenodoxin-like protein 2, mitochondrial">
    <location>
        <begin position="75"/>
        <end position="197"/>
    </location>
</feature>
<feature type="domain" description="2Fe-2S ferredoxin-type" evidence="3">
    <location>
        <begin position="81"/>
        <end position="184"/>
    </location>
</feature>
<feature type="binding site" evidence="3">
    <location>
        <position position="118"/>
    </location>
    <ligand>
        <name>[2Fe-2S] cluster</name>
        <dbReference type="ChEBI" id="CHEBI:190135"/>
    </ligand>
</feature>
<feature type="binding site" evidence="3">
    <location>
        <position position="124"/>
    </location>
    <ligand>
        <name>[2Fe-2S] cluster</name>
        <dbReference type="ChEBI" id="CHEBI:190135"/>
    </ligand>
</feature>
<feature type="binding site" evidence="3">
    <location>
        <position position="127"/>
    </location>
    <ligand>
        <name>[2Fe-2S] cluster</name>
        <dbReference type="ChEBI" id="CHEBI:190135"/>
    </ligand>
</feature>
<feature type="binding site" evidence="3">
    <location>
        <position position="165"/>
    </location>
    <ligand>
        <name>[2Fe-2S] cluster</name>
        <dbReference type="ChEBI" id="CHEBI:190135"/>
    </ligand>
</feature>
<name>MFDX2_ARATH</name>
<dbReference type="EMBL" id="AY074925">
    <property type="protein sequence ID" value="AAL82812.1"/>
    <property type="molecule type" value="mRNA"/>
</dbReference>
<dbReference type="EMBL" id="AB075739">
    <property type="protein sequence ID" value="BAB79227.1"/>
    <property type="molecule type" value="mRNA"/>
</dbReference>
<dbReference type="EMBL" id="AB081937">
    <property type="protein sequence ID" value="BAB86773.1"/>
    <property type="molecule type" value="mRNA"/>
</dbReference>
<dbReference type="EMBL" id="AL021960">
    <property type="protein sequence ID" value="CAA17528.1"/>
    <property type="status" value="ALT_SEQ"/>
    <property type="molecule type" value="Genomic_DNA"/>
</dbReference>
<dbReference type="EMBL" id="AL161554">
    <property type="protein sequence ID" value="CAB79109.1"/>
    <property type="status" value="ALT_SEQ"/>
    <property type="molecule type" value="Genomic_DNA"/>
</dbReference>
<dbReference type="EMBL" id="CP002687">
    <property type="protein sequence ID" value="AEE84398.1"/>
    <property type="molecule type" value="Genomic_DNA"/>
</dbReference>
<dbReference type="EMBL" id="CP002687">
    <property type="protein sequence ID" value="AEE84399.1"/>
    <property type="molecule type" value="Genomic_DNA"/>
</dbReference>
<dbReference type="EMBL" id="CP002687">
    <property type="protein sequence ID" value="AEE84400.1"/>
    <property type="molecule type" value="Genomic_DNA"/>
</dbReference>
<dbReference type="EMBL" id="BT004804">
    <property type="protein sequence ID" value="AAO44070.1"/>
    <property type="molecule type" value="mRNA"/>
</dbReference>
<dbReference type="EMBL" id="AK317477">
    <property type="protein sequence ID" value="BAH20142.1"/>
    <property type="molecule type" value="mRNA"/>
</dbReference>
<dbReference type="EMBL" id="AK227833">
    <property type="protein sequence ID" value="BAE99811.1"/>
    <property type="molecule type" value="mRNA"/>
</dbReference>
<dbReference type="PIR" id="T04940">
    <property type="entry name" value="T04940"/>
</dbReference>
<dbReference type="RefSeq" id="NP_001031685.1">
    <property type="nucleotide sequence ID" value="NM_001036608.1"/>
</dbReference>
<dbReference type="RefSeq" id="NP_193841.2">
    <property type="nucleotide sequence ID" value="NM_118227.4"/>
</dbReference>
<dbReference type="RefSeq" id="NP_849415.1">
    <property type="nucleotide sequence ID" value="NM_179084.2"/>
</dbReference>
<dbReference type="SMR" id="Q8S904"/>
<dbReference type="FunCoup" id="Q8S904">
    <property type="interactions" value="2990"/>
</dbReference>
<dbReference type="STRING" id="3702.Q8S904"/>
<dbReference type="PaxDb" id="3702-AT4G21090.2"/>
<dbReference type="ProteomicsDB" id="232277"/>
<dbReference type="EnsemblPlants" id="AT4G21090.1">
    <property type="protein sequence ID" value="AT4G21090.1"/>
    <property type="gene ID" value="AT4G21090"/>
</dbReference>
<dbReference type="EnsemblPlants" id="AT4G21090.2">
    <property type="protein sequence ID" value="AT4G21090.2"/>
    <property type="gene ID" value="AT4G21090"/>
</dbReference>
<dbReference type="EnsemblPlants" id="AT4G21090.3">
    <property type="protein sequence ID" value="AT4G21090.3"/>
    <property type="gene ID" value="AT4G21090"/>
</dbReference>
<dbReference type="GeneID" id="827856"/>
<dbReference type="Gramene" id="AT4G21090.1">
    <property type="protein sequence ID" value="AT4G21090.1"/>
    <property type="gene ID" value="AT4G21090"/>
</dbReference>
<dbReference type="Gramene" id="AT4G21090.2">
    <property type="protein sequence ID" value="AT4G21090.2"/>
    <property type="gene ID" value="AT4G21090"/>
</dbReference>
<dbReference type="Gramene" id="AT4G21090.3">
    <property type="protein sequence ID" value="AT4G21090.3"/>
    <property type="gene ID" value="AT4G21090"/>
</dbReference>
<dbReference type="KEGG" id="ath:AT4G21090"/>
<dbReference type="Araport" id="AT4G21090"/>
<dbReference type="TAIR" id="AT4G21090">
    <property type="gene designation" value="MFDX2"/>
</dbReference>
<dbReference type="eggNOG" id="KOG3309">
    <property type="taxonomic scope" value="Eukaryota"/>
</dbReference>
<dbReference type="HOGENOM" id="CLU_082632_0_0_1"/>
<dbReference type="InParanoid" id="Q8S904"/>
<dbReference type="OMA" id="HYLCTSF"/>
<dbReference type="PhylomeDB" id="Q8S904"/>
<dbReference type="BRENDA" id="2.8.1.6">
    <property type="organism ID" value="399"/>
</dbReference>
<dbReference type="PRO" id="PR:Q8S904"/>
<dbReference type="Proteomes" id="UP000006548">
    <property type="component" value="Chromosome 4"/>
</dbReference>
<dbReference type="ExpressionAtlas" id="Q8S904">
    <property type="expression patterns" value="baseline and differential"/>
</dbReference>
<dbReference type="GO" id="GO:0005829">
    <property type="term" value="C:cytosol"/>
    <property type="evidence" value="ECO:0007005"/>
    <property type="project" value="TAIR"/>
</dbReference>
<dbReference type="GO" id="GO:0005739">
    <property type="term" value="C:mitochondrion"/>
    <property type="evidence" value="ECO:0007005"/>
    <property type="project" value="TAIR"/>
</dbReference>
<dbReference type="GO" id="GO:0051537">
    <property type="term" value="F:2 iron, 2 sulfur cluster binding"/>
    <property type="evidence" value="ECO:0007669"/>
    <property type="project" value="UniProtKB-KW"/>
</dbReference>
<dbReference type="GO" id="GO:0046872">
    <property type="term" value="F:metal ion binding"/>
    <property type="evidence" value="ECO:0007669"/>
    <property type="project" value="UniProtKB-KW"/>
</dbReference>
<dbReference type="GO" id="GO:0140647">
    <property type="term" value="P:P450-containing electron transport chain"/>
    <property type="evidence" value="ECO:0007669"/>
    <property type="project" value="InterPro"/>
</dbReference>
<dbReference type="CDD" id="cd00207">
    <property type="entry name" value="fer2"/>
    <property type="match status" value="1"/>
</dbReference>
<dbReference type="Gene3D" id="3.10.20.30">
    <property type="match status" value="1"/>
</dbReference>
<dbReference type="InterPro" id="IPR036010">
    <property type="entry name" value="2Fe-2S_ferredoxin-like_sf"/>
</dbReference>
<dbReference type="InterPro" id="IPR001041">
    <property type="entry name" value="2Fe-2S_ferredoxin-type"/>
</dbReference>
<dbReference type="InterPro" id="IPR001055">
    <property type="entry name" value="Adrenodoxin-like"/>
</dbReference>
<dbReference type="InterPro" id="IPR018298">
    <property type="entry name" value="Adrenodoxin_Fe-S_BS"/>
</dbReference>
<dbReference type="InterPro" id="IPR012675">
    <property type="entry name" value="Beta-grasp_dom_sf"/>
</dbReference>
<dbReference type="PANTHER" id="PTHR23426:SF34">
    <property type="entry name" value="ADRENODOXIN-LIKE PROTEIN 1, MITOCHONDRIAL-RELATED"/>
    <property type="match status" value="1"/>
</dbReference>
<dbReference type="PANTHER" id="PTHR23426">
    <property type="entry name" value="FERREDOXIN/ADRENODOXIN"/>
    <property type="match status" value="1"/>
</dbReference>
<dbReference type="Pfam" id="PF00111">
    <property type="entry name" value="Fer2"/>
    <property type="match status" value="1"/>
</dbReference>
<dbReference type="PRINTS" id="PR00355">
    <property type="entry name" value="ADRENODOXIN"/>
</dbReference>
<dbReference type="SUPFAM" id="SSF54292">
    <property type="entry name" value="2Fe-2S ferredoxin-like"/>
    <property type="match status" value="1"/>
</dbReference>
<dbReference type="PROSITE" id="PS51085">
    <property type="entry name" value="2FE2S_FER_2"/>
    <property type="match status" value="1"/>
</dbReference>
<dbReference type="PROSITE" id="PS00814">
    <property type="entry name" value="ADX"/>
    <property type="match status" value="1"/>
</dbReference>
<reference key="1">
    <citation type="journal article" date="2003" name="J. Biol. Chem.">
        <title>The plant biotin synthase reaction. Identification and characterization of essential mitochondrial accessory protein components.</title>
        <authorList>
            <person name="Picciocchi A."/>
            <person name="Douce R."/>
            <person name="Alban C."/>
        </authorList>
    </citation>
    <scope>NUCLEOTIDE SEQUENCE [MRNA]</scope>
    <source>
        <strain>cv. Columbia</strain>
    </source>
</reference>
<reference key="2">
    <citation type="journal article" date="2003" name="Plant Mol. Biol.">
        <title>Identification and molecular characterization of mitochondrial ferredoxins and ferredoxin reductase from Arabidopsis.</title>
        <authorList>
            <person name="Takubo K."/>
            <person name="Morikawa T."/>
            <person name="Nonaka Y."/>
            <person name="Mizutani M."/>
            <person name="Takenaka S."/>
            <person name="Takabe K."/>
            <person name="Takahashi M.A."/>
            <person name="Ohta D."/>
        </authorList>
    </citation>
    <scope>NUCLEOTIDE SEQUENCE [MRNA]</scope>
    <source>
        <strain>cv. Columbia</strain>
    </source>
</reference>
<reference key="3">
    <citation type="journal article" date="1999" name="Nature">
        <title>Sequence and analysis of chromosome 4 of the plant Arabidopsis thaliana.</title>
        <authorList>
            <person name="Mayer K.F.X."/>
            <person name="Schueller C."/>
            <person name="Wambutt R."/>
            <person name="Murphy G."/>
            <person name="Volckaert G."/>
            <person name="Pohl T."/>
            <person name="Duesterhoeft A."/>
            <person name="Stiekema W."/>
            <person name="Entian K.-D."/>
            <person name="Terryn N."/>
            <person name="Harris B."/>
            <person name="Ansorge W."/>
            <person name="Brandt P."/>
            <person name="Grivell L.A."/>
            <person name="Rieger M."/>
            <person name="Weichselgartner M."/>
            <person name="de Simone V."/>
            <person name="Obermaier B."/>
            <person name="Mache R."/>
            <person name="Mueller M."/>
            <person name="Kreis M."/>
            <person name="Delseny M."/>
            <person name="Puigdomenech P."/>
            <person name="Watson M."/>
            <person name="Schmidtheini T."/>
            <person name="Reichert B."/>
            <person name="Portetelle D."/>
            <person name="Perez-Alonso M."/>
            <person name="Boutry M."/>
            <person name="Bancroft I."/>
            <person name="Vos P."/>
            <person name="Hoheisel J."/>
            <person name="Zimmermann W."/>
            <person name="Wedler H."/>
            <person name="Ridley P."/>
            <person name="Langham S.-A."/>
            <person name="McCullagh B."/>
            <person name="Bilham L."/>
            <person name="Robben J."/>
            <person name="van der Schueren J."/>
            <person name="Grymonprez B."/>
            <person name="Chuang Y.-J."/>
            <person name="Vandenbussche F."/>
            <person name="Braeken M."/>
            <person name="Weltjens I."/>
            <person name="Voet M."/>
            <person name="Bastiaens I."/>
            <person name="Aert R."/>
            <person name="Defoor E."/>
            <person name="Weitzenegger T."/>
            <person name="Bothe G."/>
            <person name="Ramsperger U."/>
            <person name="Hilbert H."/>
            <person name="Braun M."/>
            <person name="Holzer E."/>
            <person name="Brandt A."/>
            <person name="Peters S."/>
            <person name="van Staveren M."/>
            <person name="Dirkse W."/>
            <person name="Mooijman P."/>
            <person name="Klein Lankhorst R."/>
            <person name="Rose M."/>
            <person name="Hauf J."/>
            <person name="Koetter P."/>
            <person name="Berneiser S."/>
            <person name="Hempel S."/>
            <person name="Feldpausch M."/>
            <person name="Lamberth S."/>
            <person name="Van den Daele H."/>
            <person name="De Keyser A."/>
            <person name="Buysshaert C."/>
            <person name="Gielen J."/>
            <person name="Villarroel R."/>
            <person name="De Clercq R."/>
            <person name="van Montagu M."/>
            <person name="Rogers J."/>
            <person name="Cronin A."/>
            <person name="Quail M.A."/>
            <person name="Bray-Allen S."/>
            <person name="Clark L."/>
            <person name="Doggett J."/>
            <person name="Hall S."/>
            <person name="Kay M."/>
            <person name="Lennard N."/>
            <person name="McLay K."/>
            <person name="Mayes R."/>
            <person name="Pettett A."/>
            <person name="Rajandream M.A."/>
            <person name="Lyne M."/>
            <person name="Benes V."/>
            <person name="Rechmann S."/>
            <person name="Borkova D."/>
            <person name="Bloecker H."/>
            <person name="Scharfe M."/>
            <person name="Grimm M."/>
            <person name="Loehnert T.-H."/>
            <person name="Dose S."/>
            <person name="de Haan M."/>
            <person name="Maarse A.C."/>
            <person name="Schaefer M."/>
            <person name="Mueller-Auer S."/>
            <person name="Gabel C."/>
            <person name="Fuchs M."/>
            <person name="Fartmann B."/>
            <person name="Granderath K."/>
            <person name="Dauner D."/>
            <person name="Herzl A."/>
            <person name="Neumann S."/>
            <person name="Argiriou A."/>
            <person name="Vitale D."/>
            <person name="Liguori R."/>
            <person name="Piravandi E."/>
            <person name="Massenet O."/>
            <person name="Quigley F."/>
            <person name="Clabauld G."/>
            <person name="Muendlein A."/>
            <person name="Felber R."/>
            <person name="Schnabl S."/>
            <person name="Hiller R."/>
            <person name="Schmidt W."/>
            <person name="Lecharny A."/>
            <person name="Aubourg S."/>
            <person name="Chefdor F."/>
            <person name="Cooke R."/>
            <person name="Berger C."/>
            <person name="Monfort A."/>
            <person name="Casacuberta E."/>
            <person name="Gibbons T."/>
            <person name="Weber N."/>
            <person name="Vandenbol M."/>
            <person name="Bargues M."/>
            <person name="Terol J."/>
            <person name="Torres A."/>
            <person name="Perez-Perez A."/>
            <person name="Purnelle B."/>
            <person name="Bent E."/>
            <person name="Johnson S."/>
            <person name="Tacon D."/>
            <person name="Jesse T."/>
            <person name="Heijnen L."/>
            <person name="Schwarz S."/>
            <person name="Scholler P."/>
            <person name="Heber S."/>
            <person name="Francs P."/>
            <person name="Bielke C."/>
            <person name="Frishman D."/>
            <person name="Haase D."/>
            <person name="Lemcke K."/>
            <person name="Mewes H.-W."/>
            <person name="Stocker S."/>
            <person name="Zaccaria P."/>
            <person name="Bevan M."/>
            <person name="Wilson R.K."/>
            <person name="de la Bastide M."/>
            <person name="Habermann K."/>
            <person name="Parnell L."/>
            <person name="Dedhia N."/>
            <person name="Gnoj L."/>
            <person name="Schutz K."/>
            <person name="Huang E."/>
            <person name="Spiegel L."/>
            <person name="Sekhon M."/>
            <person name="Murray J."/>
            <person name="Sheet P."/>
            <person name="Cordes M."/>
            <person name="Abu-Threideh J."/>
            <person name="Stoneking T."/>
            <person name="Kalicki J."/>
            <person name="Graves T."/>
            <person name="Harmon G."/>
            <person name="Edwards J."/>
            <person name="Latreille P."/>
            <person name="Courtney L."/>
            <person name="Cloud J."/>
            <person name="Abbott A."/>
            <person name="Scott K."/>
            <person name="Johnson D."/>
            <person name="Minx P."/>
            <person name="Bentley D."/>
            <person name="Fulton B."/>
            <person name="Miller N."/>
            <person name="Greco T."/>
            <person name="Kemp K."/>
            <person name="Kramer J."/>
            <person name="Fulton L."/>
            <person name="Mardis E."/>
            <person name="Dante M."/>
            <person name="Pepin K."/>
            <person name="Hillier L.W."/>
            <person name="Nelson J."/>
            <person name="Spieth J."/>
            <person name="Ryan E."/>
            <person name="Andrews S."/>
            <person name="Geisel C."/>
            <person name="Layman D."/>
            <person name="Du H."/>
            <person name="Ali J."/>
            <person name="Berghoff A."/>
            <person name="Jones K."/>
            <person name="Drone K."/>
            <person name="Cotton M."/>
            <person name="Joshu C."/>
            <person name="Antonoiu B."/>
            <person name="Zidanic M."/>
            <person name="Strong C."/>
            <person name="Sun H."/>
            <person name="Lamar B."/>
            <person name="Yordan C."/>
            <person name="Ma P."/>
            <person name="Zhong J."/>
            <person name="Preston R."/>
            <person name="Vil D."/>
            <person name="Shekher M."/>
            <person name="Matero A."/>
            <person name="Shah R."/>
            <person name="Swaby I.K."/>
            <person name="O'Shaughnessy A."/>
            <person name="Rodriguez M."/>
            <person name="Hoffman J."/>
            <person name="Till S."/>
            <person name="Granat S."/>
            <person name="Shohdy N."/>
            <person name="Hasegawa A."/>
            <person name="Hameed A."/>
            <person name="Lodhi M."/>
            <person name="Johnson A."/>
            <person name="Chen E."/>
            <person name="Marra M.A."/>
            <person name="Martienssen R."/>
            <person name="McCombie W.R."/>
        </authorList>
    </citation>
    <scope>NUCLEOTIDE SEQUENCE [LARGE SCALE GENOMIC DNA]</scope>
    <source>
        <strain>cv. Columbia</strain>
    </source>
</reference>
<reference key="4">
    <citation type="journal article" date="2017" name="Plant J.">
        <title>Araport11: a complete reannotation of the Arabidopsis thaliana reference genome.</title>
        <authorList>
            <person name="Cheng C.Y."/>
            <person name="Krishnakumar V."/>
            <person name="Chan A.P."/>
            <person name="Thibaud-Nissen F."/>
            <person name="Schobel S."/>
            <person name="Town C.D."/>
        </authorList>
    </citation>
    <scope>GENOME REANNOTATION</scope>
    <source>
        <strain>cv. Columbia</strain>
    </source>
</reference>
<reference key="5">
    <citation type="journal article" date="2003" name="Science">
        <title>Empirical analysis of transcriptional activity in the Arabidopsis genome.</title>
        <authorList>
            <person name="Yamada K."/>
            <person name="Lim J."/>
            <person name="Dale J.M."/>
            <person name="Chen H."/>
            <person name="Shinn P."/>
            <person name="Palm C.J."/>
            <person name="Southwick A.M."/>
            <person name="Wu H.C."/>
            <person name="Kim C.J."/>
            <person name="Nguyen M."/>
            <person name="Pham P.K."/>
            <person name="Cheuk R.F."/>
            <person name="Karlin-Newmann G."/>
            <person name="Liu S.X."/>
            <person name="Lam B."/>
            <person name="Sakano H."/>
            <person name="Wu T."/>
            <person name="Yu G."/>
            <person name="Miranda M."/>
            <person name="Quach H.L."/>
            <person name="Tripp M."/>
            <person name="Chang C.H."/>
            <person name="Lee J.M."/>
            <person name="Toriumi M.J."/>
            <person name="Chan M.M."/>
            <person name="Tang C.C."/>
            <person name="Onodera C.S."/>
            <person name="Deng J.M."/>
            <person name="Akiyama K."/>
            <person name="Ansari Y."/>
            <person name="Arakawa T."/>
            <person name="Banh J."/>
            <person name="Banno F."/>
            <person name="Bowser L."/>
            <person name="Brooks S.Y."/>
            <person name="Carninci P."/>
            <person name="Chao Q."/>
            <person name="Choy N."/>
            <person name="Enju A."/>
            <person name="Goldsmith A.D."/>
            <person name="Gurjal M."/>
            <person name="Hansen N.F."/>
            <person name="Hayashizaki Y."/>
            <person name="Johnson-Hopson C."/>
            <person name="Hsuan V.W."/>
            <person name="Iida K."/>
            <person name="Karnes M."/>
            <person name="Khan S."/>
            <person name="Koesema E."/>
            <person name="Ishida J."/>
            <person name="Jiang P.X."/>
            <person name="Jones T."/>
            <person name="Kawai J."/>
            <person name="Kamiya A."/>
            <person name="Meyers C."/>
            <person name="Nakajima M."/>
            <person name="Narusaka M."/>
            <person name="Seki M."/>
            <person name="Sakurai T."/>
            <person name="Satou M."/>
            <person name="Tamse R."/>
            <person name="Vaysberg M."/>
            <person name="Wallender E.K."/>
            <person name="Wong C."/>
            <person name="Yamamura Y."/>
            <person name="Yuan S."/>
            <person name="Shinozaki K."/>
            <person name="Davis R.W."/>
            <person name="Theologis A."/>
            <person name="Ecker J.R."/>
        </authorList>
    </citation>
    <scope>NUCLEOTIDE SEQUENCE [LARGE SCALE MRNA]</scope>
    <source>
        <strain>cv. Columbia</strain>
    </source>
</reference>
<reference key="6">
    <citation type="journal article" date="2009" name="DNA Res.">
        <title>Analysis of multiple occurrences of alternative splicing events in Arabidopsis thaliana using novel sequenced full-length cDNAs.</title>
        <authorList>
            <person name="Iida K."/>
            <person name="Fukami-Kobayashi K."/>
            <person name="Toyoda A."/>
            <person name="Sakaki Y."/>
            <person name="Kobayashi M."/>
            <person name="Seki M."/>
            <person name="Shinozaki K."/>
        </authorList>
    </citation>
    <scope>NUCLEOTIDE SEQUENCE [LARGE SCALE MRNA]</scope>
    <source>
        <strain>cv. Columbia</strain>
    </source>
</reference>
<reference key="7">
    <citation type="submission" date="2006-07" db="EMBL/GenBank/DDBJ databases">
        <title>Large-scale analysis of RIKEN Arabidopsis full-length (RAFL) cDNAs.</title>
        <authorList>
            <person name="Totoki Y."/>
            <person name="Seki M."/>
            <person name="Ishida J."/>
            <person name="Nakajima M."/>
            <person name="Enju A."/>
            <person name="Kamiya A."/>
            <person name="Narusaka M."/>
            <person name="Shin-i T."/>
            <person name="Nakagawa M."/>
            <person name="Sakamoto N."/>
            <person name="Oishi K."/>
            <person name="Kohara Y."/>
            <person name="Kobayashi M."/>
            <person name="Toyoda A."/>
            <person name="Sakaki Y."/>
            <person name="Sakurai T."/>
            <person name="Iida K."/>
            <person name="Akiyama K."/>
            <person name="Satou M."/>
            <person name="Toyoda T."/>
            <person name="Konagaya A."/>
            <person name="Carninci P."/>
            <person name="Kawai J."/>
            <person name="Hayashizaki Y."/>
            <person name="Shinozaki K."/>
        </authorList>
    </citation>
    <scope>NUCLEOTIDE SEQUENCE [LARGE SCALE MRNA]</scope>
    <source>
        <strain>cv. Columbia</strain>
    </source>
</reference>